<name>MURA1_STAAR</name>
<evidence type="ECO:0000255" key="1">
    <source>
        <dbReference type="HAMAP-Rule" id="MF_00111"/>
    </source>
</evidence>
<organism>
    <name type="scientific">Staphylococcus aureus (strain MRSA252)</name>
    <dbReference type="NCBI Taxonomy" id="282458"/>
    <lineage>
        <taxon>Bacteria</taxon>
        <taxon>Bacillati</taxon>
        <taxon>Bacillota</taxon>
        <taxon>Bacilli</taxon>
        <taxon>Bacillales</taxon>
        <taxon>Staphylococcaceae</taxon>
        <taxon>Staphylococcus</taxon>
    </lineage>
</organism>
<accession>Q6GEX5</accession>
<gene>
    <name evidence="1" type="primary">murA1</name>
    <name type="synonym">murA</name>
    <name type="ordered locus">SAR2188</name>
</gene>
<proteinExistence type="inferred from homology"/>
<keyword id="KW-0131">Cell cycle</keyword>
<keyword id="KW-0132">Cell division</keyword>
<keyword id="KW-0133">Cell shape</keyword>
<keyword id="KW-0961">Cell wall biogenesis/degradation</keyword>
<keyword id="KW-0963">Cytoplasm</keyword>
<keyword id="KW-0573">Peptidoglycan synthesis</keyword>
<keyword id="KW-0670">Pyruvate</keyword>
<keyword id="KW-0808">Transferase</keyword>
<sequence>MDKIVIKGGNKLTGEVKVEGAKNAVLPILTASLLASDKPSKLVNVPALSDVETINNVLTTLNADVTYKKDENAVVVDATKTLNEEAPYEYVSKMRASILVMGPLLARLGHAIVALPGGCAIGSRPIEQHIKGFEALGAEIHLENGNIYANAKDGLKGTSIHLDFPSVGATQNIIMAASLAKGKTLIENAAKEPEIVDLANYINEMGGRITGAGTDTITINGVESLHGVEHAIIPDRIEAGTLLIAGAITRGDIFVRGAIKEHMASLVYKLEEMGVELEYQEDGIRVRAEGDLQPVDIKTLPHPGFPTDMQSQMMALLLTANGHKVVTETVFENRFMHVAEFKRMNANINVEGRSAKLEGKSQLQGAQVKATDLRAAAALILAGLVADGKTSVTELTHLDRGYVDLHGKLKQLGADIERIND</sequence>
<dbReference type="EC" id="2.5.1.7" evidence="1"/>
<dbReference type="EMBL" id="BX571856">
    <property type="protein sequence ID" value="CAG41169.1"/>
    <property type="molecule type" value="Genomic_DNA"/>
</dbReference>
<dbReference type="RefSeq" id="WP_000358009.1">
    <property type="nucleotide sequence ID" value="NC_002952.2"/>
</dbReference>
<dbReference type="SMR" id="Q6GEX5"/>
<dbReference type="KEGG" id="sar:SAR2188"/>
<dbReference type="HOGENOM" id="CLU_027387_0_0_9"/>
<dbReference type="UniPathway" id="UPA00219"/>
<dbReference type="Proteomes" id="UP000000596">
    <property type="component" value="Chromosome"/>
</dbReference>
<dbReference type="GO" id="GO:0005737">
    <property type="term" value="C:cytoplasm"/>
    <property type="evidence" value="ECO:0007669"/>
    <property type="project" value="UniProtKB-SubCell"/>
</dbReference>
<dbReference type="GO" id="GO:0008760">
    <property type="term" value="F:UDP-N-acetylglucosamine 1-carboxyvinyltransferase activity"/>
    <property type="evidence" value="ECO:0007669"/>
    <property type="project" value="UniProtKB-UniRule"/>
</dbReference>
<dbReference type="GO" id="GO:0051301">
    <property type="term" value="P:cell division"/>
    <property type="evidence" value="ECO:0007669"/>
    <property type="project" value="UniProtKB-KW"/>
</dbReference>
<dbReference type="GO" id="GO:0071555">
    <property type="term" value="P:cell wall organization"/>
    <property type="evidence" value="ECO:0007669"/>
    <property type="project" value="UniProtKB-KW"/>
</dbReference>
<dbReference type="GO" id="GO:0009252">
    <property type="term" value="P:peptidoglycan biosynthetic process"/>
    <property type="evidence" value="ECO:0007669"/>
    <property type="project" value="UniProtKB-UniRule"/>
</dbReference>
<dbReference type="GO" id="GO:0008360">
    <property type="term" value="P:regulation of cell shape"/>
    <property type="evidence" value="ECO:0007669"/>
    <property type="project" value="UniProtKB-KW"/>
</dbReference>
<dbReference type="GO" id="GO:0019277">
    <property type="term" value="P:UDP-N-acetylgalactosamine biosynthetic process"/>
    <property type="evidence" value="ECO:0007669"/>
    <property type="project" value="InterPro"/>
</dbReference>
<dbReference type="CDD" id="cd01555">
    <property type="entry name" value="UdpNAET"/>
    <property type="match status" value="1"/>
</dbReference>
<dbReference type="FunFam" id="3.65.10.10:FF:000001">
    <property type="entry name" value="UDP-N-acetylglucosamine 1-carboxyvinyltransferase"/>
    <property type="match status" value="1"/>
</dbReference>
<dbReference type="Gene3D" id="3.65.10.10">
    <property type="entry name" value="Enolpyruvate transferase domain"/>
    <property type="match status" value="2"/>
</dbReference>
<dbReference type="HAMAP" id="MF_00111">
    <property type="entry name" value="MurA"/>
    <property type="match status" value="1"/>
</dbReference>
<dbReference type="InterPro" id="IPR001986">
    <property type="entry name" value="Enolpyruvate_Tfrase_dom"/>
</dbReference>
<dbReference type="InterPro" id="IPR036968">
    <property type="entry name" value="Enolpyruvate_Tfrase_sf"/>
</dbReference>
<dbReference type="InterPro" id="IPR050068">
    <property type="entry name" value="MurA_subfamily"/>
</dbReference>
<dbReference type="InterPro" id="IPR013792">
    <property type="entry name" value="RNA3'P_cycl/enolpyr_Trfase_a/b"/>
</dbReference>
<dbReference type="InterPro" id="IPR005750">
    <property type="entry name" value="UDP_GlcNAc_COvinyl_MurA"/>
</dbReference>
<dbReference type="NCBIfam" id="TIGR01072">
    <property type="entry name" value="murA"/>
    <property type="match status" value="1"/>
</dbReference>
<dbReference type="NCBIfam" id="NF006873">
    <property type="entry name" value="PRK09369.1"/>
    <property type="match status" value="1"/>
</dbReference>
<dbReference type="PANTHER" id="PTHR43783">
    <property type="entry name" value="UDP-N-ACETYLGLUCOSAMINE 1-CARBOXYVINYLTRANSFERASE"/>
    <property type="match status" value="1"/>
</dbReference>
<dbReference type="PANTHER" id="PTHR43783:SF1">
    <property type="entry name" value="UDP-N-ACETYLGLUCOSAMINE 1-CARBOXYVINYLTRANSFERASE"/>
    <property type="match status" value="1"/>
</dbReference>
<dbReference type="Pfam" id="PF00275">
    <property type="entry name" value="EPSP_synthase"/>
    <property type="match status" value="1"/>
</dbReference>
<dbReference type="SUPFAM" id="SSF55205">
    <property type="entry name" value="EPT/RTPC-like"/>
    <property type="match status" value="1"/>
</dbReference>
<feature type="chain" id="PRO_0000178920" description="UDP-N-acetylglucosamine 1-carboxyvinyltransferase 1">
    <location>
        <begin position="1"/>
        <end position="421"/>
    </location>
</feature>
<feature type="active site" description="Proton donor" evidence="1">
    <location>
        <position position="119"/>
    </location>
</feature>
<feature type="binding site" evidence="1">
    <location>
        <begin position="22"/>
        <end position="23"/>
    </location>
    <ligand>
        <name>phosphoenolpyruvate</name>
        <dbReference type="ChEBI" id="CHEBI:58702"/>
    </ligand>
</feature>
<feature type="binding site" evidence="1">
    <location>
        <position position="95"/>
    </location>
    <ligand>
        <name>UDP-N-acetyl-alpha-D-glucosamine</name>
        <dbReference type="ChEBI" id="CHEBI:57705"/>
    </ligand>
</feature>
<feature type="binding site" evidence="1">
    <location>
        <begin position="124"/>
        <end position="128"/>
    </location>
    <ligand>
        <name>UDP-N-acetyl-alpha-D-glucosamine</name>
        <dbReference type="ChEBI" id="CHEBI:57705"/>
    </ligand>
</feature>
<feature type="binding site" evidence="1">
    <location>
        <position position="308"/>
    </location>
    <ligand>
        <name>UDP-N-acetyl-alpha-D-glucosamine</name>
        <dbReference type="ChEBI" id="CHEBI:57705"/>
    </ligand>
</feature>
<feature type="binding site" evidence="1">
    <location>
        <position position="330"/>
    </location>
    <ligand>
        <name>UDP-N-acetyl-alpha-D-glucosamine</name>
        <dbReference type="ChEBI" id="CHEBI:57705"/>
    </ligand>
</feature>
<feature type="modified residue" description="2-(S-cysteinyl)pyruvic acid O-phosphothioketal" evidence="1">
    <location>
        <position position="119"/>
    </location>
</feature>
<reference key="1">
    <citation type="journal article" date="2004" name="Proc. Natl. Acad. Sci. U.S.A.">
        <title>Complete genomes of two clinical Staphylococcus aureus strains: evidence for the rapid evolution of virulence and drug resistance.</title>
        <authorList>
            <person name="Holden M.T.G."/>
            <person name="Feil E.J."/>
            <person name="Lindsay J.A."/>
            <person name="Peacock S.J."/>
            <person name="Day N.P.J."/>
            <person name="Enright M.C."/>
            <person name="Foster T.J."/>
            <person name="Moore C.E."/>
            <person name="Hurst L."/>
            <person name="Atkin R."/>
            <person name="Barron A."/>
            <person name="Bason N."/>
            <person name="Bentley S.D."/>
            <person name="Chillingworth C."/>
            <person name="Chillingworth T."/>
            <person name="Churcher C."/>
            <person name="Clark L."/>
            <person name="Corton C."/>
            <person name="Cronin A."/>
            <person name="Doggett J."/>
            <person name="Dowd L."/>
            <person name="Feltwell T."/>
            <person name="Hance Z."/>
            <person name="Harris B."/>
            <person name="Hauser H."/>
            <person name="Holroyd S."/>
            <person name="Jagels K."/>
            <person name="James K.D."/>
            <person name="Lennard N."/>
            <person name="Line A."/>
            <person name="Mayes R."/>
            <person name="Moule S."/>
            <person name="Mungall K."/>
            <person name="Ormond D."/>
            <person name="Quail M.A."/>
            <person name="Rabbinowitsch E."/>
            <person name="Rutherford K.M."/>
            <person name="Sanders M."/>
            <person name="Sharp S."/>
            <person name="Simmonds M."/>
            <person name="Stevens K."/>
            <person name="Whitehead S."/>
            <person name="Barrell B.G."/>
            <person name="Spratt B.G."/>
            <person name="Parkhill J."/>
        </authorList>
    </citation>
    <scope>NUCLEOTIDE SEQUENCE [LARGE SCALE GENOMIC DNA]</scope>
    <source>
        <strain>MRSA252</strain>
    </source>
</reference>
<comment type="function">
    <text evidence="1">Cell wall formation. Adds enolpyruvyl to UDP-N-acetylglucosamine.</text>
</comment>
<comment type="catalytic activity">
    <reaction evidence="1">
        <text>phosphoenolpyruvate + UDP-N-acetyl-alpha-D-glucosamine = UDP-N-acetyl-3-O-(1-carboxyvinyl)-alpha-D-glucosamine + phosphate</text>
        <dbReference type="Rhea" id="RHEA:18681"/>
        <dbReference type="ChEBI" id="CHEBI:43474"/>
        <dbReference type="ChEBI" id="CHEBI:57705"/>
        <dbReference type="ChEBI" id="CHEBI:58702"/>
        <dbReference type="ChEBI" id="CHEBI:68483"/>
        <dbReference type="EC" id="2.5.1.7"/>
    </reaction>
</comment>
<comment type="pathway">
    <text evidence="1">Cell wall biogenesis; peptidoglycan biosynthesis.</text>
</comment>
<comment type="subcellular location">
    <subcellularLocation>
        <location evidence="1">Cytoplasm</location>
    </subcellularLocation>
</comment>
<comment type="similarity">
    <text evidence="1">Belongs to the EPSP synthase family. MurA subfamily.</text>
</comment>
<protein>
    <recommendedName>
        <fullName evidence="1">UDP-N-acetylglucosamine 1-carboxyvinyltransferase 1</fullName>
        <ecNumber evidence="1">2.5.1.7</ecNumber>
    </recommendedName>
    <alternativeName>
        <fullName evidence="1">Enoylpyruvate transferase 1</fullName>
    </alternativeName>
    <alternativeName>
        <fullName evidence="1">UDP-N-acetylglucosamine enolpyruvyl transferase 1</fullName>
        <shortName evidence="1">EPT 1</shortName>
    </alternativeName>
</protein>